<keyword id="KW-0012">Acyltransferase</keyword>
<keyword id="KW-0963">Cytoplasm</keyword>
<keyword id="KW-0408">Iron</keyword>
<keyword id="KW-0479">Metal-binding</keyword>
<keyword id="KW-1185">Reference proteome</keyword>
<keyword id="KW-0808">Transferase</keyword>
<keyword id="KW-0819">tRNA processing</keyword>
<gene>
    <name evidence="1" type="primary">kae1</name>
    <name type="ordered locus">MK1458</name>
</gene>
<feature type="chain" id="PRO_0000303634" description="tRNA N6-adenosine threonylcarbamoyltransferase">
    <location>
        <begin position="1"/>
        <end position="346"/>
    </location>
</feature>
<feature type="binding site" evidence="1">
    <location>
        <position position="109"/>
    </location>
    <ligand>
        <name>Fe cation</name>
        <dbReference type="ChEBI" id="CHEBI:24875"/>
    </ligand>
</feature>
<feature type="binding site" evidence="1">
    <location>
        <position position="113"/>
    </location>
    <ligand>
        <name>Fe cation</name>
        <dbReference type="ChEBI" id="CHEBI:24875"/>
    </ligand>
</feature>
<feature type="binding site" evidence="1">
    <location>
        <begin position="135"/>
        <end position="139"/>
    </location>
    <ligand>
        <name>substrate</name>
    </ligand>
</feature>
<feature type="binding site" evidence="1">
    <location>
        <position position="135"/>
    </location>
    <ligand>
        <name>Fe cation</name>
        <dbReference type="ChEBI" id="CHEBI:24875"/>
    </ligand>
</feature>
<feature type="binding site" evidence="1">
    <location>
        <position position="167"/>
    </location>
    <ligand>
        <name>substrate</name>
    </ligand>
</feature>
<feature type="binding site" evidence="1">
    <location>
        <position position="180"/>
    </location>
    <ligand>
        <name>substrate</name>
    </ligand>
</feature>
<feature type="binding site" evidence="1">
    <location>
        <position position="184"/>
    </location>
    <ligand>
        <name>substrate</name>
    </ligand>
</feature>
<feature type="binding site" evidence="1">
    <location>
        <position position="263"/>
    </location>
    <ligand>
        <name>substrate</name>
    </ligand>
</feature>
<feature type="binding site" evidence="1">
    <location>
        <position position="291"/>
    </location>
    <ligand>
        <name>Fe cation</name>
        <dbReference type="ChEBI" id="CHEBI:24875"/>
    </ligand>
</feature>
<organism>
    <name type="scientific">Methanopyrus kandleri (strain AV19 / DSM 6324 / JCM 9639 / NBRC 100938)</name>
    <dbReference type="NCBI Taxonomy" id="190192"/>
    <lineage>
        <taxon>Archaea</taxon>
        <taxon>Methanobacteriati</taxon>
        <taxon>Methanobacteriota</taxon>
        <taxon>Methanomada group</taxon>
        <taxon>Methanopyri</taxon>
        <taxon>Methanopyrales</taxon>
        <taxon>Methanopyraceae</taxon>
        <taxon>Methanopyrus</taxon>
    </lineage>
</organism>
<name>KAE1_METKA</name>
<dbReference type="EC" id="2.3.1.234" evidence="1"/>
<dbReference type="EMBL" id="AE009439">
    <property type="protein sequence ID" value="AAM02671.1"/>
    <property type="molecule type" value="Genomic_DNA"/>
</dbReference>
<dbReference type="SMR" id="Q8TVD4"/>
<dbReference type="FunCoup" id="Q8TVD4">
    <property type="interactions" value="145"/>
</dbReference>
<dbReference type="STRING" id="190192.MK1458"/>
<dbReference type="PaxDb" id="190192-MK1458"/>
<dbReference type="EnsemblBacteria" id="AAM02671">
    <property type="protein sequence ID" value="AAM02671"/>
    <property type="gene ID" value="MK1458"/>
</dbReference>
<dbReference type="KEGG" id="mka:MK1458"/>
<dbReference type="PATRIC" id="fig|190192.8.peg.1614"/>
<dbReference type="HOGENOM" id="CLU_023208_2_2_2"/>
<dbReference type="InParanoid" id="Q8TVD4"/>
<dbReference type="OrthoDB" id="6818at2157"/>
<dbReference type="Proteomes" id="UP000001826">
    <property type="component" value="Chromosome"/>
</dbReference>
<dbReference type="GO" id="GO:0005737">
    <property type="term" value="C:cytoplasm"/>
    <property type="evidence" value="ECO:0007669"/>
    <property type="project" value="UniProtKB-SubCell"/>
</dbReference>
<dbReference type="GO" id="GO:0000408">
    <property type="term" value="C:EKC/KEOPS complex"/>
    <property type="evidence" value="ECO:0007669"/>
    <property type="project" value="InterPro"/>
</dbReference>
<dbReference type="GO" id="GO:0005506">
    <property type="term" value="F:iron ion binding"/>
    <property type="evidence" value="ECO:0007669"/>
    <property type="project" value="UniProtKB-UniRule"/>
</dbReference>
<dbReference type="GO" id="GO:0061711">
    <property type="term" value="F:N(6)-L-threonylcarbamoyladenine synthase activity"/>
    <property type="evidence" value="ECO:0007669"/>
    <property type="project" value="UniProtKB-EC"/>
</dbReference>
<dbReference type="GO" id="GO:0002949">
    <property type="term" value="P:tRNA threonylcarbamoyladenosine modification"/>
    <property type="evidence" value="ECO:0007669"/>
    <property type="project" value="UniProtKB-UniRule"/>
</dbReference>
<dbReference type="CDD" id="cd24131">
    <property type="entry name" value="ASKHA_NBD_Kae1_arch_bac"/>
    <property type="match status" value="1"/>
</dbReference>
<dbReference type="FunFam" id="3.30.420.40:FF:000037">
    <property type="entry name" value="Probable tRNA N6-adenosine threonylcarbamoyltransferase"/>
    <property type="match status" value="1"/>
</dbReference>
<dbReference type="FunFam" id="3.30.420.40:FF:000038">
    <property type="entry name" value="Probable tRNA N6-adenosine threonylcarbamoyltransferase"/>
    <property type="match status" value="1"/>
</dbReference>
<dbReference type="Gene3D" id="3.30.420.40">
    <property type="match status" value="2"/>
</dbReference>
<dbReference type="HAMAP" id="MF_01446">
    <property type="entry name" value="Kae1"/>
    <property type="match status" value="1"/>
</dbReference>
<dbReference type="InterPro" id="IPR043129">
    <property type="entry name" value="ATPase_NBD"/>
</dbReference>
<dbReference type="InterPro" id="IPR000905">
    <property type="entry name" value="Gcp-like_dom"/>
</dbReference>
<dbReference type="InterPro" id="IPR017861">
    <property type="entry name" value="KAE1/TsaD"/>
</dbReference>
<dbReference type="InterPro" id="IPR034680">
    <property type="entry name" value="Kae1_archaea_euk"/>
</dbReference>
<dbReference type="NCBIfam" id="TIGR03722">
    <property type="entry name" value="arch_KAE1"/>
    <property type="match status" value="1"/>
</dbReference>
<dbReference type="NCBIfam" id="TIGR00329">
    <property type="entry name" value="gcp_kae1"/>
    <property type="match status" value="1"/>
</dbReference>
<dbReference type="NCBIfam" id="NF007174">
    <property type="entry name" value="PRK09605.1"/>
    <property type="match status" value="1"/>
</dbReference>
<dbReference type="PANTHER" id="PTHR11735">
    <property type="entry name" value="TRNA N6-ADENOSINE THREONYLCARBAMOYLTRANSFERASE"/>
    <property type="match status" value="1"/>
</dbReference>
<dbReference type="PANTHER" id="PTHR11735:SF14">
    <property type="entry name" value="TRNA N6-ADENOSINE THREONYLCARBAMOYLTRANSFERASE"/>
    <property type="match status" value="1"/>
</dbReference>
<dbReference type="Pfam" id="PF00814">
    <property type="entry name" value="TsaD"/>
    <property type="match status" value="1"/>
</dbReference>
<dbReference type="PRINTS" id="PR00789">
    <property type="entry name" value="OSIALOPTASE"/>
</dbReference>
<dbReference type="SUPFAM" id="SSF53067">
    <property type="entry name" value="Actin-like ATPase domain"/>
    <property type="match status" value="1"/>
</dbReference>
<sequence>MICVGIESTAEKLGVGVVTDDGEILVNVKAQYIPPPGSGILPREAAEHHSRELPELLERALKNAGVEPEDIDLVAYSQGPGLGPCLRVGATAARTLALTLEVPLAPVNHCVAHVEIGKLAARQDGFDFDEPVTLYVSGGNTQVLALKAGRYRVFGETLDLPVGNMLDTFARKVGLPHPGGPEIERLAEEGEPVELPYTVRGTDVSFSGLLTAALRRYEQGDRLEDVCAGLQETAFAMLVEITERAAAQLGRDEILLTGGVAANRRLSEMMHEMAEDRGAEAYTVPPELAGDNGAMIAWTGILVHEHGLSIPPDEIPEKAIVKQRYRVDEAPVPWAARPSRSADSQG</sequence>
<evidence type="ECO:0000255" key="1">
    <source>
        <dbReference type="HAMAP-Rule" id="MF_01446"/>
    </source>
</evidence>
<protein>
    <recommendedName>
        <fullName evidence="1">tRNA N6-adenosine threonylcarbamoyltransferase</fullName>
        <ecNumber evidence="1">2.3.1.234</ecNumber>
    </recommendedName>
    <alternativeName>
        <fullName evidence="1">N6-L-threonylcarbamoyladenine synthase</fullName>
        <shortName evidence="1">t(6)A synthase</shortName>
    </alternativeName>
    <alternativeName>
        <fullName evidence="1">t(6)A37 threonylcarbamoyladenosine biosynthesis protein Kae1</fullName>
    </alternativeName>
    <alternativeName>
        <fullName evidence="1">tRNA threonylcarbamoyladenosine biosynthesis protein Kae1</fullName>
    </alternativeName>
</protein>
<proteinExistence type="inferred from homology"/>
<comment type="function">
    <text evidence="1">Required for the formation of a threonylcarbamoyl group on adenosine at position 37 (t(6)A37) in tRNAs that read codons beginning with adenine. Is a component of the KEOPS complex that is probably involved in the transfer of the threonylcarbamoyl moiety of threonylcarbamoyl-AMP (TC-AMP) to the N6 group of A37. Kae1 likely plays a direct catalytic role in this reaction, but requires other protein(s) of the complex to fulfill this activity.</text>
</comment>
<comment type="catalytic activity">
    <reaction evidence="1">
        <text>L-threonylcarbamoyladenylate + adenosine(37) in tRNA = N(6)-L-threonylcarbamoyladenosine(37) in tRNA + AMP + H(+)</text>
        <dbReference type="Rhea" id="RHEA:37059"/>
        <dbReference type="Rhea" id="RHEA-COMP:10162"/>
        <dbReference type="Rhea" id="RHEA-COMP:10163"/>
        <dbReference type="ChEBI" id="CHEBI:15378"/>
        <dbReference type="ChEBI" id="CHEBI:73682"/>
        <dbReference type="ChEBI" id="CHEBI:74411"/>
        <dbReference type="ChEBI" id="CHEBI:74418"/>
        <dbReference type="ChEBI" id="CHEBI:456215"/>
        <dbReference type="EC" id="2.3.1.234"/>
    </reaction>
</comment>
<comment type="cofactor">
    <cofactor evidence="1">
        <name>Fe(2+)</name>
        <dbReference type="ChEBI" id="CHEBI:29033"/>
    </cofactor>
    <text evidence="1">Binds 1 Fe(2+) ion per subunit.</text>
</comment>
<comment type="subunit">
    <text evidence="1">Monomer. Component of the KEOPS complex that consists of Kae1, Bud32, Cgi121 and Pcc1; the whole complex dimerizes.</text>
</comment>
<comment type="subcellular location">
    <subcellularLocation>
        <location evidence="1">Cytoplasm</location>
    </subcellularLocation>
</comment>
<comment type="similarity">
    <text evidence="1">Belongs to the KAE1 / TsaD family.</text>
</comment>
<accession>Q8TVD4</accession>
<reference key="1">
    <citation type="journal article" date="2002" name="Proc. Natl. Acad. Sci. U.S.A.">
        <title>The complete genome of hyperthermophile Methanopyrus kandleri AV19 and monophyly of archaeal methanogens.</title>
        <authorList>
            <person name="Slesarev A.I."/>
            <person name="Mezhevaya K.V."/>
            <person name="Makarova K.S."/>
            <person name="Polushin N.N."/>
            <person name="Shcherbinina O.V."/>
            <person name="Shakhova V.V."/>
            <person name="Belova G.I."/>
            <person name="Aravind L."/>
            <person name="Natale D.A."/>
            <person name="Rogozin I.B."/>
            <person name="Tatusov R.L."/>
            <person name="Wolf Y.I."/>
            <person name="Stetter K.O."/>
            <person name="Malykh A.G."/>
            <person name="Koonin E.V."/>
            <person name="Kozyavkin S.A."/>
        </authorList>
    </citation>
    <scope>NUCLEOTIDE SEQUENCE [LARGE SCALE GENOMIC DNA]</scope>
    <source>
        <strain>AV19 / DSM 6324 / JCM 9639 / NBRC 100938</strain>
    </source>
</reference>